<name>ILVD_LEPCP</name>
<comment type="function">
    <text evidence="1">Functions in the biosynthesis of branched-chain amino acids. Catalyzes the dehydration of (2R,3R)-2,3-dihydroxy-3-methylpentanoate (2,3-dihydroxy-3-methylvalerate) into 2-oxo-3-methylpentanoate (2-oxo-3-methylvalerate) and of (2R)-2,3-dihydroxy-3-methylbutanoate (2,3-dihydroxyisovalerate) into 2-oxo-3-methylbutanoate (2-oxoisovalerate), the penultimate precursor to L-isoleucine and L-valine, respectively.</text>
</comment>
<comment type="catalytic activity">
    <reaction evidence="1">
        <text>(2R)-2,3-dihydroxy-3-methylbutanoate = 3-methyl-2-oxobutanoate + H2O</text>
        <dbReference type="Rhea" id="RHEA:24809"/>
        <dbReference type="ChEBI" id="CHEBI:11851"/>
        <dbReference type="ChEBI" id="CHEBI:15377"/>
        <dbReference type="ChEBI" id="CHEBI:49072"/>
        <dbReference type="EC" id="4.2.1.9"/>
    </reaction>
    <physiologicalReaction direction="left-to-right" evidence="1">
        <dbReference type="Rhea" id="RHEA:24810"/>
    </physiologicalReaction>
</comment>
<comment type="catalytic activity">
    <reaction evidence="1">
        <text>(2R,3R)-2,3-dihydroxy-3-methylpentanoate = (S)-3-methyl-2-oxopentanoate + H2O</text>
        <dbReference type="Rhea" id="RHEA:27694"/>
        <dbReference type="ChEBI" id="CHEBI:15377"/>
        <dbReference type="ChEBI" id="CHEBI:35146"/>
        <dbReference type="ChEBI" id="CHEBI:49258"/>
        <dbReference type="EC" id="4.2.1.9"/>
    </reaction>
    <physiologicalReaction direction="left-to-right" evidence="1">
        <dbReference type="Rhea" id="RHEA:27695"/>
    </physiologicalReaction>
</comment>
<comment type="cofactor">
    <cofactor evidence="1">
        <name>[2Fe-2S] cluster</name>
        <dbReference type="ChEBI" id="CHEBI:190135"/>
    </cofactor>
    <text evidence="1">Binds 1 [2Fe-2S] cluster per subunit. This cluster acts as a Lewis acid cofactor.</text>
</comment>
<comment type="cofactor">
    <cofactor evidence="1">
        <name>Mg(2+)</name>
        <dbReference type="ChEBI" id="CHEBI:18420"/>
    </cofactor>
</comment>
<comment type="pathway">
    <text evidence="1">Amino-acid biosynthesis; L-isoleucine biosynthesis; L-isoleucine from 2-oxobutanoate: step 3/4.</text>
</comment>
<comment type="pathway">
    <text evidence="1">Amino-acid biosynthesis; L-valine biosynthesis; L-valine from pyruvate: step 3/4.</text>
</comment>
<comment type="subunit">
    <text evidence="1">Homodimer.</text>
</comment>
<comment type="similarity">
    <text evidence="1">Belongs to the IlvD/Edd family.</text>
</comment>
<reference key="1">
    <citation type="submission" date="2008-03" db="EMBL/GenBank/DDBJ databases">
        <title>Complete sequence of Leptothrix cholodnii SP-6.</title>
        <authorList>
            <consortium name="US DOE Joint Genome Institute"/>
            <person name="Copeland A."/>
            <person name="Lucas S."/>
            <person name="Lapidus A."/>
            <person name="Glavina del Rio T."/>
            <person name="Dalin E."/>
            <person name="Tice H."/>
            <person name="Bruce D."/>
            <person name="Goodwin L."/>
            <person name="Pitluck S."/>
            <person name="Chertkov O."/>
            <person name="Brettin T."/>
            <person name="Detter J.C."/>
            <person name="Han C."/>
            <person name="Kuske C.R."/>
            <person name="Schmutz J."/>
            <person name="Larimer F."/>
            <person name="Land M."/>
            <person name="Hauser L."/>
            <person name="Kyrpides N."/>
            <person name="Lykidis A."/>
            <person name="Emerson D."/>
            <person name="Richardson P."/>
        </authorList>
    </citation>
    <scope>NUCLEOTIDE SEQUENCE [LARGE SCALE GENOMIC DNA]</scope>
    <source>
        <strain>ATCC 51168 / LMG 8142 / SP-6</strain>
    </source>
</reference>
<feature type="chain" id="PRO_1000089394" description="Dihydroxy-acid dehydratase">
    <location>
        <begin position="1"/>
        <end position="560"/>
    </location>
</feature>
<feature type="active site" description="Proton acceptor" evidence="1">
    <location>
        <position position="472"/>
    </location>
</feature>
<feature type="binding site" evidence="1">
    <location>
        <position position="50"/>
    </location>
    <ligand>
        <name>[2Fe-2S] cluster</name>
        <dbReference type="ChEBI" id="CHEBI:190135"/>
    </ligand>
</feature>
<feature type="binding site" evidence="1">
    <location>
        <position position="82"/>
    </location>
    <ligand>
        <name>Mg(2+)</name>
        <dbReference type="ChEBI" id="CHEBI:18420"/>
    </ligand>
</feature>
<feature type="binding site" evidence="1">
    <location>
        <position position="123"/>
    </location>
    <ligand>
        <name>[2Fe-2S] cluster</name>
        <dbReference type="ChEBI" id="CHEBI:190135"/>
    </ligand>
</feature>
<feature type="binding site" evidence="1">
    <location>
        <position position="124"/>
    </location>
    <ligand>
        <name>Mg(2+)</name>
        <dbReference type="ChEBI" id="CHEBI:18420"/>
    </ligand>
</feature>
<feature type="binding site" description="via carbamate group" evidence="1">
    <location>
        <position position="125"/>
    </location>
    <ligand>
        <name>Mg(2+)</name>
        <dbReference type="ChEBI" id="CHEBI:18420"/>
    </ligand>
</feature>
<feature type="binding site" evidence="1">
    <location>
        <position position="195"/>
    </location>
    <ligand>
        <name>[2Fe-2S] cluster</name>
        <dbReference type="ChEBI" id="CHEBI:190135"/>
    </ligand>
</feature>
<feature type="binding site" evidence="1">
    <location>
        <position position="446"/>
    </location>
    <ligand>
        <name>Mg(2+)</name>
        <dbReference type="ChEBI" id="CHEBI:18420"/>
    </ligand>
</feature>
<feature type="modified residue" description="N6-carboxylysine" evidence="1">
    <location>
        <position position="125"/>
    </location>
</feature>
<organism>
    <name type="scientific">Leptothrix cholodnii (strain ATCC 51168 / LMG 8142 / SP-6)</name>
    <name type="common">Leptothrix discophora (strain SP-6)</name>
    <dbReference type="NCBI Taxonomy" id="395495"/>
    <lineage>
        <taxon>Bacteria</taxon>
        <taxon>Pseudomonadati</taxon>
        <taxon>Pseudomonadota</taxon>
        <taxon>Betaproteobacteria</taxon>
        <taxon>Burkholderiales</taxon>
        <taxon>Sphaerotilaceae</taxon>
        <taxon>Leptothrix</taxon>
    </lineage>
</organism>
<gene>
    <name evidence="1" type="primary">ilvD</name>
    <name type="ordered locus">Lcho_1490</name>
</gene>
<accession>B1Y816</accession>
<evidence type="ECO:0000255" key="1">
    <source>
        <dbReference type="HAMAP-Rule" id="MF_00012"/>
    </source>
</evidence>
<protein>
    <recommendedName>
        <fullName evidence="1">Dihydroxy-acid dehydratase</fullName>
        <shortName evidence="1">DAD</shortName>
        <ecNumber evidence="1">4.2.1.9</ecNumber>
    </recommendedName>
</protein>
<dbReference type="EC" id="4.2.1.9" evidence="1"/>
<dbReference type="EMBL" id="CP001013">
    <property type="protein sequence ID" value="ACB33758.1"/>
    <property type="molecule type" value="Genomic_DNA"/>
</dbReference>
<dbReference type="RefSeq" id="WP_012346520.1">
    <property type="nucleotide sequence ID" value="NC_010524.1"/>
</dbReference>
<dbReference type="SMR" id="B1Y816"/>
<dbReference type="STRING" id="395495.Lcho_1490"/>
<dbReference type="KEGG" id="lch:Lcho_1490"/>
<dbReference type="eggNOG" id="COG0129">
    <property type="taxonomic scope" value="Bacteria"/>
</dbReference>
<dbReference type="HOGENOM" id="CLU_014271_4_2_4"/>
<dbReference type="OrthoDB" id="9807077at2"/>
<dbReference type="UniPathway" id="UPA00047">
    <property type="reaction ID" value="UER00057"/>
</dbReference>
<dbReference type="UniPathway" id="UPA00049">
    <property type="reaction ID" value="UER00061"/>
</dbReference>
<dbReference type="Proteomes" id="UP000001693">
    <property type="component" value="Chromosome"/>
</dbReference>
<dbReference type="GO" id="GO:0051537">
    <property type="term" value="F:2 iron, 2 sulfur cluster binding"/>
    <property type="evidence" value="ECO:0007669"/>
    <property type="project" value="UniProtKB-UniRule"/>
</dbReference>
<dbReference type="GO" id="GO:0004160">
    <property type="term" value="F:dihydroxy-acid dehydratase activity"/>
    <property type="evidence" value="ECO:0007669"/>
    <property type="project" value="UniProtKB-UniRule"/>
</dbReference>
<dbReference type="GO" id="GO:0000287">
    <property type="term" value="F:magnesium ion binding"/>
    <property type="evidence" value="ECO:0007669"/>
    <property type="project" value="UniProtKB-UniRule"/>
</dbReference>
<dbReference type="GO" id="GO:0009097">
    <property type="term" value="P:isoleucine biosynthetic process"/>
    <property type="evidence" value="ECO:0007669"/>
    <property type="project" value="UniProtKB-UniRule"/>
</dbReference>
<dbReference type="GO" id="GO:0009099">
    <property type="term" value="P:L-valine biosynthetic process"/>
    <property type="evidence" value="ECO:0007669"/>
    <property type="project" value="UniProtKB-UniRule"/>
</dbReference>
<dbReference type="FunFam" id="3.50.30.80:FF:000001">
    <property type="entry name" value="Dihydroxy-acid dehydratase"/>
    <property type="match status" value="1"/>
</dbReference>
<dbReference type="Gene3D" id="3.50.30.80">
    <property type="entry name" value="IlvD/EDD C-terminal domain-like"/>
    <property type="match status" value="1"/>
</dbReference>
<dbReference type="HAMAP" id="MF_00012">
    <property type="entry name" value="IlvD"/>
    <property type="match status" value="1"/>
</dbReference>
<dbReference type="InterPro" id="IPR050165">
    <property type="entry name" value="DHAD_IlvD/Edd"/>
</dbReference>
<dbReference type="InterPro" id="IPR042096">
    <property type="entry name" value="Dihydro-acid_dehy_C"/>
</dbReference>
<dbReference type="InterPro" id="IPR004404">
    <property type="entry name" value="DihydroxyA_deHydtase"/>
</dbReference>
<dbReference type="InterPro" id="IPR020558">
    <property type="entry name" value="DiOHA_6PGluconate_deHydtase_CS"/>
</dbReference>
<dbReference type="InterPro" id="IPR056740">
    <property type="entry name" value="ILV_EDD_C"/>
</dbReference>
<dbReference type="InterPro" id="IPR000581">
    <property type="entry name" value="ILV_EDD_N"/>
</dbReference>
<dbReference type="InterPro" id="IPR037237">
    <property type="entry name" value="IlvD/EDD_N"/>
</dbReference>
<dbReference type="NCBIfam" id="TIGR00110">
    <property type="entry name" value="ilvD"/>
    <property type="match status" value="1"/>
</dbReference>
<dbReference type="NCBIfam" id="NF002068">
    <property type="entry name" value="PRK00911.1"/>
    <property type="match status" value="1"/>
</dbReference>
<dbReference type="PANTHER" id="PTHR21000">
    <property type="entry name" value="DIHYDROXY-ACID DEHYDRATASE DAD"/>
    <property type="match status" value="1"/>
</dbReference>
<dbReference type="PANTHER" id="PTHR21000:SF5">
    <property type="entry name" value="DIHYDROXY-ACID DEHYDRATASE, MITOCHONDRIAL"/>
    <property type="match status" value="1"/>
</dbReference>
<dbReference type="Pfam" id="PF24877">
    <property type="entry name" value="ILV_EDD_C"/>
    <property type="match status" value="1"/>
</dbReference>
<dbReference type="Pfam" id="PF00920">
    <property type="entry name" value="ILVD_EDD_N"/>
    <property type="match status" value="1"/>
</dbReference>
<dbReference type="SUPFAM" id="SSF143975">
    <property type="entry name" value="IlvD/EDD N-terminal domain-like"/>
    <property type="match status" value="1"/>
</dbReference>
<dbReference type="SUPFAM" id="SSF52016">
    <property type="entry name" value="LeuD/IlvD-like"/>
    <property type="match status" value="1"/>
</dbReference>
<dbReference type="PROSITE" id="PS00886">
    <property type="entry name" value="ILVD_EDD_1"/>
    <property type="match status" value="1"/>
</dbReference>
<dbReference type="PROSITE" id="PS00887">
    <property type="entry name" value="ILVD_EDD_2"/>
    <property type="match status" value="1"/>
</dbReference>
<sequence length="560" mass="58756">MSFNRRSKNITEGVARAPNRSMYYALGYQQDDFSKPMIGVANGHSTITPCNSGLQKLADAAVIGIKEAGGNPQIFGTPTISDGMAMGTEGMKYSLVSREVIADCVETCVGGQWMDGVIVIGGCDKNMPGGMMGMLRANVPALYVYGGTILPGKYKGQDLNIVSVFEAVGQFSAGKMAEEDFCEIERRAIPGSGSCGGMYTANTMSSSFEALGMSLPYSSTMANVEEEIVASVKVAAGVLVEAVKADLKPRDIVTKKAIENAVAVIMATGGSTNAVLHFLAIAHAAEVEWTIDDFERVRRRTPVLCDLKPSGKYLAIDLHHAGGIPAVMKELLKHGLLHGDCMTITGKTVAENLADVPDLRADQDVIRAVTNPIYAEGHLAILKGNLSPEGCVAKITGLKSPVMTGPARVFEDEQSALAAIMANKIVAGDVMVLRYLGPKGGPGMPEMLAPTGALIGQGLGESVGLITDGRFSGGTWGMVVGHVAPEAYAGGNIALVQEGDSITIDAHQLLLQLNVSDDELARRRAAWTAPAPRYTRGVLAKFAFNASSASAGAVLDKFGG</sequence>
<proteinExistence type="inferred from homology"/>
<keyword id="KW-0001">2Fe-2S</keyword>
<keyword id="KW-0028">Amino-acid biosynthesis</keyword>
<keyword id="KW-0100">Branched-chain amino acid biosynthesis</keyword>
<keyword id="KW-0408">Iron</keyword>
<keyword id="KW-0411">Iron-sulfur</keyword>
<keyword id="KW-0456">Lyase</keyword>
<keyword id="KW-0460">Magnesium</keyword>
<keyword id="KW-0479">Metal-binding</keyword>
<keyword id="KW-1185">Reference proteome</keyword>